<sequence length="476" mass="57791">MKKQNLNSILLMYINYIINYFNNIHKNQLKKDWIMEYEYMYKFLMNNMTCFIKWDNNKILLLLDMYYNVLYNYHKQRTPMSNKRLMNSKNIMDYKLLYTYFYILNKMKMEMDNYNNNNNNISLKYNELLKNIMNNLNYKTSNIETNLSNNFYLMDKYLINKYMKYLDMLNMIPNNYMFNNINYKGKLNIKTVLDLNNNEFYDYLSGLIEGDGYIGPGGITITNHANDVLNTIFINKRIKNSILVEKWMDTLKDNPYFVNAFSINIKTNLAKEKIFTNIYNKLYSDYKINQINNHIPYYNYLKINNKLPIKNIMDIKNNYWLAGFTAADGSFLSSMYNPKDTLLFKNMRPSYVISQVETRKELIYLIQESFDLSISNVKKVGNRKLKDFKLFTRTTDELMKFIYYFDKFLPLHDNKQFNYIKFRFNTFIKSYNWNNRVFGLVLSEYINNIKIDNYDYYYYNKYINMHNARKPKGYIK</sequence>
<proteinExistence type="evidence at protein level"/>
<reference key="1">
    <citation type="journal article" date="1985" name="Nucleic Acids Res.">
        <title>A mitochondrial reading frame which may code for a maturase-like protein in Saccharomyces cerevisiae.</title>
        <authorList>
            <person name="Seraphin B."/>
            <person name="Simon M."/>
            <person name="Faye G."/>
        </authorList>
    </citation>
    <scope>NUCLEOTIDE SEQUENCE [GENOMIC DNA]</scope>
    <source>
        <strain>D273-10B/A</strain>
    </source>
</reference>
<reference key="2">
    <citation type="journal article" date="1987" name="J. Biol. Chem.">
        <title>The mitochondrial reading frame RF3 is a functional gene in Saccharomyces uvarum.</title>
        <authorList>
            <person name="Seraphin B."/>
            <person name="Simon M."/>
            <person name="Faye G."/>
        </authorList>
    </citation>
    <scope>NUCLEOTIDE SEQUENCE [GENOMIC DNA]</scope>
    <source>
        <strain>4228 / ATCC 9080 / CBS 2354 / DSM 70424 / NBRC 0565 / NCYC 74 / NRRL Y-1089</strain>
    </source>
</reference>
<reference key="3">
    <citation type="journal article" date="1991" name="J. Biol. Chem.">
        <title>A maturase-like subunit of the sequence-specific endonuclease endo.SceI from yeast mitochondria.</title>
        <authorList>
            <person name="Nakagawa K."/>
            <person name="Morishima N."/>
            <person name="Shibata T."/>
        </authorList>
    </citation>
    <scope>NUCLEOTIDE SEQUENCE [GENOMIC DNA]</scope>
    <scope>PROTEIN SEQUENCE OF 34-39; 110-118; 140-154; 191-199; 248-251; 274-281; 288-299 AND 458-461</scope>
    <scope>FUNCTION</scope>
    <source>
        <strain>ATCC 46276 / IAM 4274 / NCYC 1408 / OC-2</strain>
    </source>
</reference>
<reference key="4">
    <citation type="journal article" date="1991" name="J. Biol. Chem.">
        <authorList>
            <person name="Nakagawa K."/>
            <person name="Morishima N."/>
            <person name="Shibata T."/>
        </authorList>
    </citation>
    <scope>ERRATUM OF PUBMED:1988456</scope>
</reference>
<reference key="5">
    <citation type="journal article" date="1988" name="Eur. J. Biochem.">
        <title>Subunit structure of a yeast site-specific endodeoxyribonuclease, endo SceI. A study using monoclonal antibodies.</title>
        <authorList>
            <person name="Nakagawa K."/>
            <person name="Hashikawa J."/>
            <person name="Makino O."/>
            <person name="Ando T."/>
            <person name="Shibata T."/>
        </authorList>
    </citation>
    <scope>IDENTIFICATION IN ENDONUCLEASE SCEI</scope>
    <scope>FUNCTION</scope>
</reference>
<reference key="6">
    <citation type="journal article" date="1995" name="Adv. Biophys.">
        <title>Multi-site-specific endonucleases and the initiation of homologous genetic recombination in yeast.</title>
        <authorList>
            <person name="Shibata T."/>
            <person name="Nakagawa K."/>
            <person name="Morishima N."/>
        </authorList>
    </citation>
    <scope>FUNCTION</scope>
</reference>
<reference key="7">
    <citation type="journal article" date="1999" name="J. Biol. Chem.">
        <title>Stable association of 70-kDa heat shock protein induces latent multisite specificity of a unisite-specific endonuclease in yeast mitochondria.</title>
        <authorList>
            <person name="Mizumura H."/>
            <person name="Shibata T."/>
            <person name="Morishima N."/>
        </authorList>
    </citation>
    <scope>FUNCTION</scope>
</reference>
<name>ENS2_YEASX</name>
<evidence type="ECO:0000269" key="1">
    <source>
    </source>
</evidence>
<evidence type="ECO:0000269" key="2">
    <source>
    </source>
</evidence>
<evidence type="ECO:0000269" key="3">
    <source>
    </source>
</evidence>
<evidence type="ECO:0000269" key="4">
    <source>
    </source>
</evidence>
<evidence type="ECO:0000305" key="5"/>
<geneLocation type="mitochondrion"/>
<dbReference type="EC" id="3.1.21.-"/>
<dbReference type="EMBL" id="X02421">
    <property type="protein sequence ID" value="CAA26271.1"/>
    <property type="status" value="ALT_SEQ"/>
    <property type="molecule type" value="Genomic_DNA"/>
</dbReference>
<dbReference type="EMBL" id="X02421">
    <property type="protein sequence ID" value="CAA26272.1"/>
    <property type="status" value="ALT_SEQ"/>
    <property type="molecule type" value="Genomic_DNA"/>
</dbReference>
<dbReference type="EMBL" id="X02421">
    <property type="protein sequence ID" value="CAA26273.1"/>
    <property type="status" value="ALT_SEQ"/>
    <property type="molecule type" value="Genomic_DNA"/>
</dbReference>
<dbReference type="EMBL" id="X02421">
    <property type="protein sequence ID" value="CAA26274.1"/>
    <property type="status" value="ALT_SEQ"/>
    <property type="molecule type" value="Genomic_DNA"/>
</dbReference>
<dbReference type="EMBL" id="J03300">
    <property type="protein sequence ID" value="AAA32166.2"/>
    <property type="molecule type" value="Genomic_DNA"/>
</dbReference>
<dbReference type="EMBL" id="M63839">
    <property type="protein sequence ID" value="AAA32160.2"/>
    <property type="molecule type" value="Genomic_DNA"/>
</dbReference>
<dbReference type="PIR" id="A23003">
    <property type="entry name" value="A23003"/>
</dbReference>
<dbReference type="PIR" id="A28439">
    <property type="entry name" value="A28439"/>
</dbReference>
<dbReference type="SMR" id="P12294"/>
<dbReference type="ComplexPortal" id="CPX-1741">
    <property type="entry name" value="Endonuclease SceI"/>
</dbReference>
<dbReference type="DIP" id="DIP-2N"/>
<dbReference type="IntAct" id="P12294">
    <property type="interactions" value="1"/>
</dbReference>
<dbReference type="REBASE" id="2773">
    <property type="entry name" value="F-SceI"/>
</dbReference>
<dbReference type="SGD" id="S000029698">
    <property type="gene designation" value="ENS2"/>
</dbReference>
<dbReference type="GO" id="GO:1905347">
    <property type="term" value="C:endodeoxyribonuclease complex"/>
    <property type="evidence" value="ECO:0000314"/>
    <property type="project" value="ComplexPortal"/>
</dbReference>
<dbReference type="GO" id="GO:0005739">
    <property type="term" value="C:mitochondrion"/>
    <property type="evidence" value="ECO:0000314"/>
    <property type="project" value="ComplexPortal"/>
</dbReference>
<dbReference type="GO" id="GO:0004519">
    <property type="term" value="F:endonuclease activity"/>
    <property type="evidence" value="ECO:0000314"/>
    <property type="project" value="SGD"/>
</dbReference>
<dbReference type="GO" id="GO:0032042">
    <property type="term" value="P:mitochondrial DNA metabolic process"/>
    <property type="evidence" value="ECO:0000314"/>
    <property type="project" value="ComplexPortal"/>
</dbReference>
<dbReference type="GO" id="GO:0000018">
    <property type="term" value="P:regulation of DNA recombination"/>
    <property type="evidence" value="ECO:0000314"/>
    <property type="project" value="ComplexPortal"/>
</dbReference>
<dbReference type="GO" id="GO:0008380">
    <property type="term" value="P:RNA splicing"/>
    <property type="evidence" value="ECO:0000314"/>
    <property type="project" value="SGD"/>
</dbReference>
<dbReference type="Gene3D" id="3.10.28.10">
    <property type="entry name" value="Homing endonucleases"/>
    <property type="match status" value="1"/>
</dbReference>
<dbReference type="InterPro" id="IPR027434">
    <property type="entry name" value="Homing_endonucl"/>
</dbReference>
<dbReference type="InterPro" id="IPR004860">
    <property type="entry name" value="LAGLIDADG_dom"/>
</dbReference>
<dbReference type="Pfam" id="PF00961">
    <property type="entry name" value="LAGLIDADG_1"/>
    <property type="match status" value="1"/>
</dbReference>
<dbReference type="SUPFAM" id="SSF55608">
    <property type="entry name" value="Homing endonucleases"/>
    <property type="match status" value="1"/>
</dbReference>
<accession>P12294</accession>
<accession>E9P9W9</accession>
<accession>P05512</accession>
<protein>
    <recommendedName>
        <fullName>Endonuclease SceI small subunit</fullName>
        <ecNumber>3.1.21.-</ecNumber>
    </recommendedName>
    <alternativeName>
        <fullName>Endo.SceI 50 kDa subunit</fullName>
    </alternativeName>
    <alternativeName>
        <fullName>Maturase-like RF3 protein</fullName>
    </alternativeName>
</protein>
<keyword id="KW-0903">Direct protein sequencing</keyword>
<keyword id="KW-0255">Endonuclease</keyword>
<keyword id="KW-0378">Hydrolase</keyword>
<keyword id="KW-0496">Mitochondrion</keyword>
<keyword id="KW-0540">Nuclease</keyword>
<comment type="function">
    <text evidence="1 2 3 4">Catalytic component of endonuclease SceI (Endo.SceI), which cleaves specifically at multiple sites on mitochondrial DNA and produces double-stranded breaks.</text>
</comment>
<comment type="subunit">
    <text evidence="3">Endonuclease SceI (Endo.SceI) is a heterodimer of ENS2 and SSC1.</text>
</comment>
<comment type="interaction">
    <interactant intactId="EBI-6490">
        <id>P12294</id>
    </interactant>
    <interactant intactId="EBI-8637">
        <id>P0CS90</id>
        <label>SSC1</label>
    </interactant>
    <organismsDiffer>true</organismsDiffer>
    <experiments>2</experiments>
</comment>
<comment type="subcellular location">
    <subcellularLocation>
        <location>Mitochondrion</location>
    </subcellularLocation>
</comment>
<comment type="PTM">
    <text>The N-terminus is blocked.</text>
</comment>
<comment type="similarity">
    <text evidence="5">Belongs to the LAGLIDADG endonuclease family.</text>
</comment>
<comment type="caution">
    <text evidence="5">S.cerevisiae displays strain polymorphism with regard to Endo.SceI endouclease activity. This is due to the mitochondrion-encoded, catalytic subunit ENS2, which exhibits strain polymorphism. It can be either present as continuous ORF in the mitochondrial genome (e.g. strain IAM 4274), present but disrupted by the insertion of GC clusters (e.g. strain D273-10B/A), or completely absent in the mitochondrial genome (e.g. strain S288c).</text>
</comment>
<comment type="sequence caution" evidence="5">
    <conflict type="miscellaneous discrepancy">
        <sequence resource="EMBL-CDS" id="CAA26271"/>
    </conflict>
    <text>In strain D273-10B/A, RF3 is interrupted by GC clusters, which introduce a shift of +1 base und thus break the frame, producing 4 overlapping ORFs.</text>
</comment>
<comment type="sequence caution" evidence="5">
    <conflict type="miscellaneous discrepancy">
        <sequence resource="EMBL-CDS" id="CAA26272"/>
    </conflict>
    <text>In strain D273-10B/A, RF3 is interrupted by GC clusters, which introduce a shift of +1 base und thus break the frame, producing 4 overlapping ORFs.</text>
</comment>
<comment type="sequence caution" evidence="5">
    <conflict type="miscellaneous discrepancy">
        <sequence resource="EMBL-CDS" id="CAA26273"/>
    </conflict>
    <text>In strain D273-10B/A, RF3 is interrupted by GC clusters, which introduce a shift of +1 base und thus break the frame, producing 4 overlapping ORFs.</text>
</comment>
<comment type="sequence caution" evidence="5">
    <conflict type="miscellaneous discrepancy">
        <sequence resource="EMBL-CDS" id="CAA26274"/>
    </conflict>
    <text>In strain D273-10B/A, RF3 is interrupted by GC clusters, which introduce a shift of +1 base und thus break the frame, producing 4 overlapping ORFs.</text>
</comment>
<feature type="chain" id="PRO_0000086979" description="Endonuclease SceI small subunit">
    <location>
        <begin position="1"/>
        <end position="476"/>
    </location>
</feature>
<feature type="sequence variant" description="In strain: D273-10B/A.">
    <original>E</original>
    <variation>G</variation>
    <location>
        <position position="36"/>
    </location>
</feature>
<feature type="sequence variant" description="In strain: D273-10B/A and NCYC 74.">
    <original>G</original>
    <variation>K</variation>
    <location>
        <position position="217"/>
    </location>
</feature>
<feature type="sequence variant" description="In strain: D273-10B/A and NCYC 74.">
    <original>N</original>
    <variation>D</variation>
    <location>
        <position position="346"/>
    </location>
</feature>
<organism>
    <name type="scientific">Saccharomyces cerevisiae</name>
    <name type="common">Baker's yeast</name>
    <dbReference type="NCBI Taxonomy" id="4932"/>
    <lineage>
        <taxon>Eukaryota</taxon>
        <taxon>Fungi</taxon>
        <taxon>Dikarya</taxon>
        <taxon>Ascomycota</taxon>
        <taxon>Saccharomycotina</taxon>
        <taxon>Saccharomycetes</taxon>
        <taxon>Saccharomycetales</taxon>
        <taxon>Saccharomycetaceae</taxon>
        <taxon>Saccharomyces</taxon>
    </lineage>
</organism>
<gene>
    <name type="primary">ENS2</name>
    <name type="synonym">RF3</name>
</gene>